<sequence length="373" mass="42122">MDFRIIARDASCHARRGRLRTAHGTFDTPVFMPVGTQASVKSLSPDELEDLGAHIILGNTYHLLLRPGAERVARLGGLHRFMHWNRSILTDSGGFQVFSLARINRIEEDGVVFQSHIDGARHAITPETSMECQMQLGSDIAMCFDECTAYPVTYEYARESMLRTVRWAARSKEAHTLPEQSLFGIVQGGVFCDLRRDCLERLVETGFDGYALGSLSVGESKEEMLSVLEAVAPGLPAASPRYVMGVGTPEDLVEGVRCGVDMFDCVMPTRNARNGMLFTVRGGIQIKNSRYADDDRPIEEGCSCYTCRRFSRAYLRHLFLARELLAYRLNTLHNLHYYLGLMAAMREAIEANAFDRWRRSFYLDRENREPAEE</sequence>
<dbReference type="EC" id="2.4.2.29" evidence="1"/>
<dbReference type="EMBL" id="CP000478">
    <property type="protein sequence ID" value="ABK16264.1"/>
    <property type="molecule type" value="Genomic_DNA"/>
</dbReference>
<dbReference type="RefSeq" id="WP_011697437.1">
    <property type="nucleotide sequence ID" value="NC_008554.1"/>
</dbReference>
<dbReference type="SMR" id="A0LFR2"/>
<dbReference type="FunCoup" id="A0LFR2">
    <property type="interactions" value="559"/>
</dbReference>
<dbReference type="STRING" id="335543.Sfum_0565"/>
<dbReference type="KEGG" id="sfu:Sfum_0565"/>
<dbReference type="eggNOG" id="COG0343">
    <property type="taxonomic scope" value="Bacteria"/>
</dbReference>
<dbReference type="HOGENOM" id="CLU_022060_0_1_7"/>
<dbReference type="InParanoid" id="A0LFR2"/>
<dbReference type="OrthoDB" id="9805417at2"/>
<dbReference type="UniPathway" id="UPA00392"/>
<dbReference type="Proteomes" id="UP000001784">
    <property type="component" value="Chromosome"/>
</dbReference>
<dbReference type="GO" id="GO:0005829">
    <property type="term" value="C:cytosol"/>
    <property type="evidence" value="ECO:0007669"/>
    <property type="project" value="TreeGrafter"/>
</dbReference>
<dbReference type="GO" id="GO:0046872">
    <property type="term" value="F:metal ion binding"/>
    <property type="evidence" value="ECO:0007669"/>
    <property type="project" value="UniProtKB-KW"/>
</dbReference>
<dbReference type="GO" id="GO:0008479">
    <property type="term" value="F:tRNA-guanosine(34) queuine transglycosylase activity"/>
    <property type="evidence" value="ECO:0007669"/>
    <property type="project" value="UniProtKB-UniRule"/>
</dbReference>
<dbReference type="GO" id="GO:0008616">
    <property type="term" value="P:queuosine biosynthetic process"/>
    <property type="evidence" value="ECO:0007669"/>
    <property type="project" value="UniProtKB-UniRule"/>
</dbReference>
<dbReference type="GO" id="GO:0002099">
    <property type="term" value="P:tRNA wobble guanine modification"/>
    <property type="evidence" value="ECO:0007669"/>
    <property type="project" value="TreeGrafter"/>
</dbReference>
<dbReference type="GO" id="GO:0101030">
    <property type="term" value="P:tRNA-guanine transglycosylation"/>
    <property type="evidence" value="ECO:0007669"/>
    <property type="project" value="InterPro"/>
</dbReference>
<dbReference type="FunFam" id="3.20.20.105:FF:000001">
    <property type="entry name" value="Queuine tRNA-ribosyltransferase"/>
    <property type="match status" value="1"/>
</dbReference>
<dbReference type="Gene3D" id="3.20.20.105">
    <property type="entry name" value="Queuine tRNA-ribosyltransferase-like"/>
    <property type="match status" value="1"/>
</dbReference>
<dbReference type="HAMAP" id="MF_00168">
    <property type="entry name" value="Q_tRNA_Tgt"/>
    <property type="match status" value="1"/>
</dbReference>
<dbReference type="InterPro" id="IPR050076">
    <property type="entry name" value="ArchSynthase1/Queuine_TRR"/>
</dbReference>
<dbReference type="InterPro" id="IPR004803">
    <property type="entry name" value="TGT"/>
</dbReference>
<dbReference type="InterPro" id="IPR036511">
    <property type="entry name" value="TGT-like_sf"/>
</dbReference>
<dbReference type="InterPro" id="IPR002616">
    <property type="entry name" value="tRNA_ribo_trans-like"/>
</dbReference>
<dbReference type="NCBIfam" id="TIGR00430">
    <property type="entry name" value="Q_tRNA_tgt"/>
    <property type="match status" value="1"/>
</dbReference>
<dbReference type="NCBIfam" id="TIGR00449">
    <property type="entry name" value="tgt_general"/>
    <property type="match status" value="1"/>
</dbReference>
<dbReference type="PANTHER" id="PTHR46499">
    <property type="entry name" value="QUEUINE TRNA-RIBOSYLTRANSFERASE"/>
    <property type="match status" value="1"/>
</dbReference>
<dbReference type="PANTHER" id="PTHR46499:SF1">
    <property type="entry name" value="QUEUINE TRNA-RIBOSYLTRANSFERASE"/>
    <property type="match status" value="1"/>
</dbReference>
<dbReference type="Pfam" id="PF01702">
    <property type="entry name" value="TGT"/>
    <property type="match status" value="1"/>
</dbReference>
<dbReference type="SUPFAM" id="SSF51713">
    <property type="entry name" value="tRNA-guanine transglycosylase"/>
    <property type="match status" value="1"/>
</dbReference>
<proteinExistence type="inferred from homology"/>
<name>TGT_SYNFM</name>
<feature type="chain" id="PRO_1000016880" description="Queuine tRNA-ribosyltransferase">
    <location>
        <begin position="1"/>
        <end position="373"/>
    </location>
</feature>
<feature type="region of interest" description="RNA binding" evidence="1">
    <location>
        <begin position="245"/>
        <end position="251"/>
    </location>
</feature>
<feature type="region of interest" description="RNA binding; important for wobble base 34 recognition" evidence="1">
    <location>
        <begin position="269"/>
        <end position="273"/>
    </location>
</feature>
<feature type="active site" description="Proton acceptor" evidence="1">
    <location>
        <position position="91"/>
    </location>
</feature>
<feature type="active site" description="Nucleophile" evidence="1">
    <location>
        <position position="264"/>
    </location>
</feature>
<feature type="binding site" evidence="1">
    <location>
        <begin position="91"/>
        <end position="95"/>
    </location>
    <ligand>
        <name>substrate</name>
    </ligand>
</feature>
<feature type="binding site" evidence="1">
    <location>
        <position position="145"/>
    </location>
    <ligand>
        <name>substrate</name>
    </ligand>
</feature>
<feature type="binding site" evidence="1">
    <location>
        <position position="187"/>
    </location>
    <ligand>
        <name>substrate</name>
    </ligand>
</feature>
<feature type="binding site" evidence="1">
    <location>
        <position position="302"/>
    </location>
    <ligand>
        <name>Zn(2+)</name>
        <dbReference type="ChEBI" id="CHEBI:29105"/>
    </ligand>
</feature>
<feature type="binding site" evidence="1">
    <location>
        <position position="304"/>
    </location>
    <ligand>
        <name>Zn(2+)</name>
        <dbReference type="ChEBI" id="CHEBI:29105"/>
    </ligand>
</feature>
<feature type="binding site" evidence="1">
    <location>
        <position position="307"/>
    </location>
    <ligand>
        <name>Zn(2+)</name>
        <dbReference type="ChEBI" id="CHEBI:29105"/>
    </ligand>
</feature>
<feature type="binding site" evidence="1">
    <location>
        <position position="333"/>
    </location>
    <ligand>
        <name>Zn(2+)</name>
        <dbReference type="ChEBI" id="CHEBI:29105"/>
    </ligand>
</feature>
<organism>
    <name type="scientific">Syntrophobacter fumaroxidans (strain DSM 10017 / MPOB)</name>
    <dbReference type="NCBI Taxonomy" id="335543"/>
    <lineage>
        <taxon>Bacteria</taxon>
        <taxon>Pseudomonadati</taxon>
        <taxon>Thermodesulfobacteriota</taxon>
        <taxon>Syntrophobacteria</taxon>
        <taxon>Syntrophobacterales</taxon>
        <taxon>Syntrophobacteraceae</taxon>
        <taxon>Syntrophobacter</taxon>
    </lineage>
</organism>
<evidence type="ECO:0000255" key="1">
    <source>
        <dbReference type="HAMAP-Rule" id="MF_00168"/>
    </source>
</evidence>
<reference key="1">
    <citation type="submission" date="2006-10" db="EMBL/GenBank/DDBJ databases">
        <title>Complete sequence of Syntrophobacter fumaroxidans MPOB.</title>
        <authorList>
            <consortium name="US DOE Joint Genome Institute"/>
            <person name="Copeland A."/>
            <person name="Lucas S."/>
            <person name="Lapidus A."/>
            <person name="Barry K."/>
            <person name="Detter J.C."/>
            <person name="Glavina del Rio T."/>
            <person name="Hammon N."/>
            <person name="Israni S."/>
            <person name="Pitluck S."/>
            <person name="Goltsman E.G."/>
            <person name="Martinez M."/>
            <person name="Schmutz J."/>
            <person name="Larimer F."/>
            <person name="Land M."/>
            <person name="Hauser L."/>
            <person name="Kyrpides N."/>
            <person name="Kim E."/>
            <person name="Boone D.R."/>
            <person name="Brockman F."/>
            <person name="Culley D."/>
            <person name="Ferry J."/>
            <person name="Gunsalus R."/>
            <person name="McInerney M.J."/>
            <person name="Morrison M."/>
            <person name="Plugge C."/>
            <person name="Rohlin L."/>
            <person name="Scholten J."/>
            <person name="Sieber J."/>
            <person name="Stams A.J.M."/>
            <person name="Worm P."/>
            <person name="Henstra A.M."/>
            <person name="Richardson P."/>
        </authorList>
    </citation>
    <scope>NUCLEOTIDE SEQUENCE [LARGE SCALE GENOMIC DNA]</scope>
    <source>
        <strain>DSM 10017 / MPOB</strain>
    </source>
</reference>
<keyword id="KW-0328">Glycosyltransferase</keyword>
<keyword id="KW-0479">Metal-binding</keyword>
<keyword id="KW-0671">Queuosine biosynthesis</keyword>
<keyword id="KW-1185">Reference proteome</keyword>
<keyword id="KW-0808">Transferase</keyword>
<keyword id="KW-0819">tRNA processing</keyword>
<keyword id="KW-0862">Zinc</keyword>
<protein>
    <recommendedName>
        <fullName evidence="1">Queuine tRNA-ribosyltransferase</fullName>
        <ecNumber evidence="1">2.4.2.29</ecNumber>
    </recommendedName>
    <alternativeName>
        <fullName evidence="1">Guanine insertion enzyme</fullName>
    </alternativeName>
    <alternativeName>
        <fullName evidence="1">tRNA-guanine transglycosylase</fullName>
    </alternativeName>
</protein>
<gene>
    <name evidence="1" type="primary">tgt</name>
    <name type="ordered locus">Sfum_0565</name>
</gene>
<comment type="function">
    <text evidence="1">Catalyzes the base-exchange of a guanine (G) residue with the queuine precursor 7-aminomethyl-7-deazaguanine (PreQ1) at position 34 (anticodon wobble position) in tRNAs with GU(N) anticodons (tRNA-Asp, -Asn, -His and -Tyr). Catalysis occurs through a double-displacement mechanism. The nucleophile active site attacks the C1' of nucleotide 34 to detach the guanine base from the RNA, forming a covalent enzyme-RNA intermediate. The proton acceptor active site deprotonates the incoming PreQ1, allowing a nucleophilic attack on the C1' of the ribose to form the product. After dissociation, two additional enzymatic reactions on the tRNA convert PreQ1 to queuine (Q), resulting in the hypermodified nucleoside queuosine (7-(((4,5-cis-dihydroxy-2-cyclopenten-1-yl)amino)methyl)-7-deazaguanosine).</text>
</comment>
<comment type="catalytic activity">
    <reaction evidence="1">
        <text>7-aminomethyl-7-carbaguanine + guanosine(34) in tRNA = 7-aminomethyl-7-carbaguanosine(34) in tRNA + guanine</text>
        <dbReference type="Rhea" id="RHEA:24104"/>
        <dbReference type="Rhea" id="RHEA-COMP:10341"/>
        <dbReference type="Rhea" id="RHEA-COMP:10342"/>
        <dbReference type="ChEBI" id="CHEBI:16235"/>
        <dbReference type="ChEBI" id="CHEBI:58703"/>
        <dbReference type="ChEBI" id="CHEBI:74269"/>
        <dbReference type="ChEBI" id="CHEBI:82833"/>
        <dbReference type="EC" id="2.4.2.29"/>
    </reaction>
</comment>
<comment type="cofactor">
    <cofactor evidence="1">
        <name>Zn(2+)</name>
        <dbReference type="ChEBI" id="CHEBI:29105"/>
    </cofactor>
    <text evidence="1">Binds 1 zinc ion per subunit.</text>
</comment>
<comment type="pathway">
    <text evidence="1">tRNA modification; tRNA-queuosine biosynthesis.</text>
</comment>
<comment type="subunit">
    <text evidence="1">Homodimer. Within each dimer, one monomer is responsible for RNA recognition and catalysis, while the other monomer binds to the replacement base PreQ1.</text>
</comment>
<comment type="similarity">
    <text evidence="1">Belongs to the queuine tRNA-ribosyltransferase family.</text>
</comment>
<accession>A0LFR2</accession>